<reference key="1">
    <citation type="journal article" date="2009" name="PLoS Pathog.">
        <title>Molecular evolutionary consequences of niche restriction in Francisella tularensis, a facultative intracellular pathogen.</title>
        <authorList>
            <person name="Larsson P."/>
            <person name="Elfsmark D."/>
            <person name="Svensson K."/>
            <person name="Wikstroem P."/>
            <person name="Forsman M."/>
            <person name="Brettin T."/>
            <person name="Keim P."/>
            <person name="Johansson A."/>
        </authorList>
    </citation>
    <scope>NUCLEOTIDE SEQUENCE [LARGE SCALE GENOMIC DNA]</scope>
    <source>
        <strain>FSC147</strain>
    </source>
</reference>
<dbReference type="EC" id="7.1.1.-" evidence="1"/>
<dbReference type="EMBL" id="CP000915">
    <property type="protein sequence ID" value="ACD30195.1"/>
    <property type="molecule type" value="Genomic_DNA"/>
</dbReference>
<dbReference type="SMR" id="B2SEV0"/>
<dbReference type="KEGG" id="ftm:FTM_0095"/>
<dbReference type="HOGENOM" id="CLU_055737_7_3_6"/>
<dbReference type="GO" id="GO:0005886">
    <property type="term" value="C:plasma membrane"/>
    <property type="evidence" value="ECO:0007669"/>
    <property type="project" value="UniProtKB-SubCell"/>
</dbReference>
<dbReference type="GO" id="GO:0045271">
    <property type="term" value="C:respiratory chain complex I"/>
    <property type="evidence" value="ECO:0007669"/>
    <property type="project" value="TreeGrafter"/>
</dbReference>
<dbReference type="GO" id="GO:0051539">
    <property type="term" value="F:4 iron, 4 sulfur cluster binding"/>
    <property type="evidence" value="ECO:0007669"/>
    <property type="project" value="UniProtKB-KW"/>
</dbReference>
<dbReference type="GO" id="GO:0005506">
    <property type="term" value="F:iron ion binding"/>
    <property type="evidence" value="ECO:0007669"/>
    <property type="project" value="UniProtKB-UniRule"/>
</dbReference>
<dbReference type="GO" id="GO:0008137">
    <property type="term" value="F:NADH dehydrogenase (ubiquinone) activity"/>
    <property type="evidence" value="ECO:0007669"/>
    <property type="project" value="InterPro"/>
</dbReference>
<dbReference type="GO" id="GO:0050136">
    <property type="term" value="F:NADH:ubiquinone reductase (non-electrogenic) activity"/>
    <property type="evidence" value="ECO:0007669"/>
    <property type="project" value="UniProtKB-UniRule"/>
</dbReference>
<dbReference type="GO" id="GO:0048038">
    <property type="term" value="F:quinone binding"/>
    <property type="evidence" value="ECO:0007669"/>
    <property type="project" value="UniProtKB-KW"/>
</dbReference>
<dbReference type="GO" id="GO:0009060">
    <property type="term" value="P:aerobic respiration"/>
    <property type="evidence" value="ECO:0007669"/>
    <property type="project" value="TreeGrafter"/>
</dbReference>
<dbReference type="GO" id="GO:0015990">
    <property type="term" value="P:electron transport coupled proton transport"/>
    <property type="evidence" value="ECO:0007669"/>
    <property type="project" value="TreeGrafter"/>
</dbReference>
<dbReference type="FunFam" id="3.40.50.12280:FF:000001">
    <property type="entry name" value="NADH-quinone oxidoreductase subunit B 2"/>
    <property type="match status" value="1"/>
</dbReference>
<dbReference type="Gene3D" id="3.40.50.12280">
    <property type="match status" value="1"/>
</dbReference>
<dbReference type="HAMAP" id="MF_01356">
    <property type="entry name" value="NDH1_NuoB"/>
    <property type="match status" value="1"/>
</dbReference>
<dbReference type="InterPro" id="IPR006137">
    <property type="entry name" value="NADH_UbQ_OxRdtase-like_20kDa"/>
</dbReference>
<dbReference type="InterPro" id="IPR006138">
    <property type="entry name" value="NADH_UQ_OxRdtase_20Kd_su"/>
</dbReference>
<dbReference type="NCBIfam" id="TIGR01957">
    <property type="entry name" value="nuoB_fam"/>
    <property type="match status" value="1"/>
</dbReference>
<dbReference type="NCBIfam" id="NF005012">
    <property type="entry name" value="PRK06411.1"/>
    <property type="match status" value="1"/>
</dbReference>
<dbReference type="PANTHER" id="PTHR11995">
    <property type="entry name" value="NADH DEHYDROGENASE"/>
    <property type="match status" value="1"/>
</dbReference>
<dbReference type="PANTHER" id="PTHR11995:SF14">
    <property type="entry name" value="NADH DEHYDROGENASE [UBIQUINONE] IRON-SULFUR PROTEIN 7, MITOCHONDRIAL"/>
    <property type="match status" value="1"/>
</dbReference>
<dbReference type="Pfam" id="PF01058">
    <property type="entry name" value="Oxidored_q6"/>
    <property type="match status" value="1"/>
</dbReference>
<dbReference type="SUPFAM" id="SSF56770">
    <property type="entry name" value="HydA/Nqo6-like"/>
    <property type="match status" value="1"/>
</dbReference>
<dbReference type="PROSITE" id="PS01150">
    <property type="entry name" value="COMPLEX1_20K"/>
    <property type="match status" value="1"/>
</dbReference>
<accession>B2SEV0</accession>
<gene>
    <name evidence="1" type="primary">nuoB</name>
    <name type="ordered locus">FTM_0095</name>
</gene>
<feature type="chain" id="PRO_1000166655" description="NADH-quinone oxidoreductase subunit B">
    <location>
        <begin position="1"/>
        <end position="158"/>
    </location>
</feature>
<feature type="binding site" evidence="1">
    <location>
        <position position="36"/>
    </location>
    <ligand>
        <name>[4Fe-4S] cluster</name>
        <dbReference type="ChEBI" id="CHEBI:49883"/>
    </ligand>
</feature>
<feature type="binding site" evidence="1">
    <location>
        <position position="37"/>
    </location>
    <ligand>
        <name>[4Fe-4S] cluster</name>
        <dbReference type="ChEBI" id="CHEBI:49883"/>
    </ligand>
</feature>
<feature type="binding site" evidence="1">
    <location>
        <position position="101"/>
    </location>
    <ligand>
        <name>[4Fe-4S] cluster</name>
        <dbReference type="ChEBI" id="CHEBI:49883"/>
    </ligand>
</feature>
<feature type="binding site" evidence="1">
    <location>
        <position position="131"/>
    </location>
    <ligand>
        <name>[4Fe-4S] cluster</name>
        <dbReference type="ChEBI" id="CHEBI:49883"/>
    </ligand>
</feature>
<protein>
    <recommendedName>
        <fullName evidence="1">NADH-quinone oxidoreductase subunit B</fullName>
        <ecNumber evidence="1">7.1.1.-</ecNumber>
    </recommendedName>
    <alternativeName>
        <fullName evidence="1">NADH dehydrogenase I subunit B</fullName>
    </alternativeName>
    <alternativeName>
        <fullName evidence="1">NDH-1 subunit B</fullName>
    </alternativeName>
</protein>
<comment type="function">
    <text evidence="1">NDH-1 shuttles electrons from NADH, via FMN and iron-sulfur (Fe-S) centers, to quinones in the respiratory chain. The immediate electron acceptor for the enzyme in this species is believed to be ubiquinone. Couples the redox reaction to proton translocation (for every two electrons transferred, four hydrogen ions are translocated across the cytoplasmic membrane), and thus conserves the redox energy in a proton gradient.</text>
</comment>
<comment type="catalytic activity">
    <reaction evidence="1">
        <text>a quinone + NADH + 5 H(+)(in) = a quinol + NAD(+) + 4 H(+)(out)</text>
        <dbReference type="Rhea" id="RHEA:57888"/>
        <dbReference type="ChEBI" id="CHEBI:15378"/>
        <dbReference type="ChEBI" id="CHEBI:24646"/>
        <dbReference type="ChEBI" id="CHEBI:57540"/>
        <dbReference type="ChEBI" id="CHEBI:57945"/>
        <dbReference type="ChEBI" id="CHEBI:132124"/>
    </reaction>
</comment>
<comment type="cofactor">
    <cofactor evidence="1">
        <name>[4Fe-4S] cluster</name>
        <dbReference type="ChEBI" id="CHEBI:49883"/>
    </cofactor>
    <text evidence="1">Binds 1 [4Fe-4S] cluster.</text>
</comment>
<comment type="subunit">
    <text evidence="1">NDH-1 is composed of 14 different subunits. Subunits NuoB, C, D, E, F, and G constitute the peripheral sector of the complex.</text>
</comment>
<comment type="subcellular location">
    <subcellularLocation>
        <location evidence="1">Cell inner membrane</location>
        <topology evidence="1">Peripheral membrane protein</topology>
        <orientation evidence="1">Cytoplasmic side</orientation>
    </subcellularLocation>
</comment>
<comment type="similarity">
    <text evidence="1">Belongs to the complex I 20 kDa subunit family.</text>
</comment>
<evidence type="ECO:0000255" key="1">
    <source>
        <dbReference type="HAMAP-Rule" id="MF_01356"/>
    </source>
</evidence>
<keyword id="KW-0004">4Fe-4S</keyword>
<keyword id="KW-0997">Cell inner membrane</keyword>
<keyword id="KW-1003">Cell membrane</keyword>
<keyword id="KW-0408">Iron</keyword>
<keyword id="KW-0411">Iron-sulfur</keyword>
<keyword id="KW-0472">Membrane</keyword>
<keyword id="KW-0479">Metal-binding</keyword>
<keyword id="KW-0520">NAD</keyword>
<keyword id="KW-0874">Quinone</keyword>
<keyword id="KW-1278">Translocase</keyword>
<keyword id="KW-0813">Transport</keyword>
<keyword id="KW-0830">Ubiquinone</keyword>
<proteinExistence type="inferred from homology"/>
<sequence>MGIGNENKGFITASADALINWVRTGSLWPVTTGLACCAVEMMHAGAARYDLDRFGIVFRPSPRQSDVLIVAGTLCNKMAPALRQVYDQMPDPKWVISMGSCANGGGYYHYSYSVVRGCDRIVPVDIYVPGCPPTAEALVYGIIQLQNKIIRKDTIARK</sequence>
<name>NUOB_FRATM</name>
<organism>
    <name type="scientific">Francisella tularensis subsp. mediasiatica (strain FSC147)</name>
    <dbReference type="NCBI Taxonomy" id="441952"/>
    <lineage>
        <taxon>Bacteria</taxon>
        <taxon>Pseudomonadati</taxon>
        <taxon>Pseudomonadota</taxon>
        <taxon>Gammaproteobacteria</taxon>
        <taxon>Thiotrichales</taxon>
        <taxon>Francisellaceae</taxon>
        <taxon>Francisella</taxon>
    </lineage>
</organism>